<organism>
    <name type="scientific">Vibrio cholerae serotype O1 (strain ATCC 39315 / El Tor Inaba N16961)</name>
    <dbReference type="NCBI Taxonomy" id="243277"/>
    <lineage>
        <taxon>Bacteria</taxon>
        <taxon>Pseudomonadati</taxon>
        <taxon>Pseudomonadota</taxon>
        <taxon>Gammaproteobacteria</taxon>
        <taxon>Vibrionales</taxon>
        <taxon>Vibrionaceae</taxon>
        <taxon>Vibrio</taxon>
    </lineage>
</organism>
<gene>
    <name type="primary">cspA</name>
    <name type="ordered locus">VC_A0166</name>
</gene>
<name>CSPA_VIBCH</name>
<reference key="1">
    <citation type="journal article" date="2000" name="Nature">
        <title>DNA sequence of both chromosomes of the cholera pathogen Vibrio cholerae.</title>
        <authorList>
            <person name="Heidelberg J.F."/>
            <person name="Eisen J.A."/>
            <person name="Nelson W.C."/>
            <person name="Clayton R.A."/>
            <person name="Gwinn M.L."/>
            <person name="Dodson R.J."/>
            <person name="Haft D.H."/>
            <person name="Hickey E.K."/>
            <person name="Peterson J.D."/>
            <person name="Umayam L.A."/>
            <person name="Gill S.R."/>
            <person name="Nelson K.E."/>
            <person name="Read T.D."/>
            <person name="Tettelin H."/>
            <person name="Richardson D.L."/>
            <person name="Ermolaeva M.D."/>
            <person name="Vamathevan J.J."/>
            <person name="Bass S."/>
            <person name="Qin H."/>
            <person name="Dragoi I."/>
            <person name="Sellers P."/>
            <person name="McDonald L.A."/>
            <person name="Utterback T.R."/>
            <person name="Fleischmann R.D."/>
            <person name="Nierman W.C."/>
            <person name="White O."/>
            <person name="Salzberg S.L."/>
            <person name="Smith H.O."/>
            <person name="Colwell R.R."/>
            <person name="Mekalanos J.J."/>
            <person name="Venter J.C."/>
            <person name="Fraser C.M."/>
        </authorList>
    </citation>
    <scope>NUCLEOTIDE SEQUENCE [LARGE SCALE GENOMIC DNA]</scope>
    <source>
        <strain>ATCC 39315 / El Tor Inaba N16961</strain>
    </source>
</reference>
<dbReference type="EMBL" id="AE003853">
    <property type="protein sequence ID" value="AAF96079.1"/>
    <property type="molecule type" value="Genomic_DNA"/>
</dbReference>
<dbReference type="PIR" id="G82492">
    <property type="entry name" value="G82492"/>
</dbReference>
<dbReference type="RefSeq" id="NP_232566.1">
    <property type="nucleotide sequence ID" value="NC_002506.1"/>
</dbReference>
<dbReference type="RefSeq" id="WP_000078819.1">
    <property type="nucleotide sequence ID" value="NZ_LT906615.1"/>
</dbReference>
<dbReference type="SMR" id="Q9KN00"/>
<dbReference type="STRING" id="243277.VC_A0166"/>
<dbReference type="DNASU" id="2611900"/>
<dbReference type="EnsemblBacteria" id="AAF96079">
    <property type="protein sequence ID" value="AAF96079"/>
    <property type="gene ID" value="VC_A0166"/>
</dbReference>
<dbReference type="KEGG" id="vch:VC_A0166"/>
<dbReference type="PATRIC" id="fig|243277.26.peg.2804"/>
<dbReference type="eggNOG" id="COG1278">
    <property type="taxonomic scope" value="Bacteria"/>
</dbReference>
<dbReference type="HOGENOM" id="CLU_117621_2_2_6"/>
<dbReference type="Proteomes" id="UP000000584">
    <property type="component" value="Chromosome 2"/>
</dbReference>
<dbReference type="GO" id="GO:0005829">
    <property type="term" value="C:cytosol"/>
    <property type="evidence" value="ECO:0007669"/>
    <property type="project" value="UniProtKB-ARBA"/>
</dbReference>
<dbReference type="GO" id="GO:0003677">
    <property type="term" value="F:DNA binding"/>
    <property type="evidence" value="ECO:0007669"/>
    <property type="project" value="UniProtKB-KW"/>
</dbReference>
<dbReference type="GO" id="GO:0003676">
    <property type="term" value="F:nucleic acid binding"/>
    <property type="evidence" value="ECO:0000318"/>
    <property type="project" value="GO_Central"/>
</dbReference>
<dbReference type="GO" id="GO:0010468">
    <property type="term" value="P:regulation of gene expression"/>
    <property type="evidence" value="ECO:0000318"/>
    <property type="project" value="GO_Central"/>
</dbReference>
<dbReference type="CDD" id="cd04458">
    <property type="entry name" value="CSP_CDS"/>
    <property type="match status" value="1"/>
</dbReference>
<dbReference type="FunFam" id="2.40.50.140:FF:000006">
    <property type="entry name" value="Cold shock protein CspC"/>
    <property type="match status" value="1"/>
</dbReference>
<dbReference type="Gene3D" id="2.40.50.140">
    <property type="entry name" value="Nucleic acid-binding proteins"/>
    <property type="match status" value="1"/>
</dbReference>
<dbReference type="InterPro" id="IPR012156">
    <property type="entry name" value="Cold_shock_CspA"/>
</dbReference>
<dbReference type="InterPro" id="IPR050181">
    <property type="entry name" value="Cold_shock_domain"/>
</dbReference>
<dbReference type="InterPro" id="IPR011129">
    <property type="entry name" value="CSD"/>
</dbReference>
<dbReference type="InterPro" id="IPR019844">
    <property type="entry name" value="CSD_CS"/>
</dbReference>
<dbReference type="InterPro" id="IPR002059">
    <property type="entry name" value="CSP_DNA-bd"/>
</dbReference>
<dbReference type="InterPro" id="IPR012340">
    <property type="entry name" value="NA-bd_OB-fold"/>
</dbReference>
<dbReference type="PANTHER" id="PTHR11544">
    <property type="entry name" value="COLD SHOCK DOMAIN CONTAINING PROTEINS"/>
    <property type="match status" value="1"/>
</dbReference>
<dbReference type="Pfam" id="PF00313">
    <property type="entry name" value="CSD"/>
    <property type="match status" value="1"/>
</dbReference>
<dbReference type="PIRSF" id="PIRSF002599">
    <property type="entry name" value="Cold_shock_A"/>
    <property type="match status" value="1"/>
</dbReference>
<dbReference type="PRINTS" id="PR00050">
    <property type="entry name" value="COLDSHOCK"/>
</dbReference>
<dbReference type="SMART" id="SM00357">
    <property type="entry name" value="CSP"/>
    <property type="match status" value="1"/>
</dbReference>
<dbReference type="SUPFAM" id="SSF50249">
    <property type="entry name" value="Nucleic acid-binding proteins"/>
    <property type="match status" value="1"/>
</dbReference>
<dbReference type="PROSITE" id="PS00352">
    <property type="entry name" value="CSD_1"/>
    <property type="match status" value="1"/>
</dbReference>
<dbReference type="PROSITE" id="PS51857">
    <property type="entry name" value="CSD_2"/>
    <property type="match status" value="1"/>
</dbReference>
<proteinExistence type="inferred from homology"/>
<feature type="chain" id="PRO_0000100340" description="Cold shock-like protein CspA">
    <location>
        <begin position="1"/>
        <end position="70"/>
    </location>
</feature>
<feature type="domain" description="CSD">
    <location>
        <begin position="7"/>
        <end position="67"/>
    </location>
</feature>
<comment type="subcellular location">
    <subcellularLocation>
        <location evidence="1">Cytoplasm</location>
    </subcellularLocation>
</comment>
<protein>
    <recommendedName>
        <fullName>Cold shock-like protein CspA</fullName>
    </recommendedName>
</protein>
<sequence length="70" mass="7629">MSQKMTGSVKWFNETKGFGFISQDNGGQDVFVHFKSIVSEGFKTLAEGQRVSFTVEQGKKGPQAAQVTAL</sequence>
<keyword id="KW-0010">Activator</keyword>
<keyword id="KW-0963">Cytoplasm</keyword>
<keyword id="KW-0238">DNA-binding</keyword>
<keyword id="KW-1185">Reference proteome</keyword>
<keyword id="KW-0804">Transcription</keyword>
<keyword id="KW-0805">Transcription regulation</keyword>
<accession>Q9KN00</accession>
<evidence type="ECO:0000250" key="1"/>